<keyword id="KW-0507">mRNA processing</keyword>
<keyword id="KW-0539">Nucleus</keyword>
<keyword id="KW-1185">Reference proteome</keyword>
<keyword id="KW-0687">Ribonucleoprotein</keyword>
<keyword id="KW-0694">RNA-binding</keyword>
<protein>
    <recommendedName>
        <fullName>U1 small nuclear ribonucleoprotein 70 kDa</fullName>
        <shortName>U1 snRNP 70 kDa</shortName>
        <shortName>U1-70K</shortName>
        <shortName>snRNP70</shortName>
    </recommendedName>
</protein>
<name>RU17_XENTR</name>
<gene>
    <name type="primary">snrnp70</name>
    <name type="synonym">snrp70</name>
    <name type="ORF">TNeu055c14.1</name>
</gene>
<feature type="chain" id="PRO_0000081883" description="U1 small nuclear ribonucleoprotein 70 kDa">
    <location>
        <begin position="1"/>
        <end position="471"/>
    </location>
</feature>
<feature type="domain" description="RRM" evidence="3">
    <location>
        <begin position="103"/>
        <end position="184"/>
    </location>
</feature>
<feature type="region of interest" description="Disordered" evidence="4">
    <location>
        <begin position="48"/>
        <end position="78"/>
    </location>
</feature>
<feature type="region of interest" description="Required for interaction with U1 RNA" evidence="1">
    <location>
        <begin position="92"/>
        <end position="202"/>
    </location>
</feature>
<feature type="region of interest" description="Disordered" evidence="4">
    <location>
        <begin position="187"/>
        <end position="471"/>
    </location>
</feature>
<feature type="compositionally biased region" description="Basic and acidic residues" evidence="4">
    <location>
        <begin position="60"/>
        <end position="78"/>
    </location>
</feature>
<feature type="compositionally biased region" description="Gly residues" evidence="4">
    <location>
        <begin position="192"/>
        <end position="201"/>
    </location>
</feature>
<feature type="compositionally biased region" description="Basic and acidic residues" evidence="4">
    <location>
        <begin position="207"/>
        <end position="245"/>
    </location>
</feature>
<feature type="compositionally biased region" description="Basic residues" evidence="4">
    <location>
        <begin position="246"/>
        <end position="259"/>
    </location>
</feature>
<feature type="compositionally biased region" description="Basic and acidic residues" evidence="4">
    <location>
        <begin position="260"/>
        <end position="293"/>
    </location>
</feature>
<feature type="compositionally biased region" description="Basic residues" evidence="4">
    <location>
        <begin position="294"/>
        <end position="303"/>
    </location>
</feature>
<feature type="compositionally biased region" description="Basic and acidic residues" evidence="4">
    <location>
        <begin position="304"/>
        <end position="321"/>
    </location>
</feature>
<feature type="compositionally biased region" description="Basic and acidic residues" evidence="4">
    <location>
        <begin position="344"/>
        <end position="428"/>
    </location>
</feature>
<proteinExistence type="evidence at transcript level"/>
<comment type="function">
    <text evidence="1">Component of the spliceosomal U1 snRNP, which is essential for recognition of the pre-mRNA 5' splice-site and the subsequent assembly of the spliceosome. snrnp70 binds to the loop I region of U1-snRNA.</text>
</comment>
<comment type="subunit">
    <text evidence="1">Component of the U1 snRNP. The U1 snRNP is composed of the U1 snRNA and the 7 core Sm proteins snrpb, snrpd1, snrpd2, snrpd3, snrpe, snrpf and snrpg that assemble in a heptameric protein ring on the Sm site of the small nuclear RNA to form the core snRNP, and at least three U1 snRNP-specific proteins snrnp70/U1-70K, snrpa/U1-A and snrpc/U1-C.</text>
</comment>
<comment type="subcellular location">
    <subcellularLocation>
        <location evidence="2">Nucleus speckle</location>
    </subcellularLocation>
    <subcellularLocation>
        <location evidence="2">Nucleus</location>
        <location evidence="2">Nucleoplasm</location>
    </subcellularLocation>
</comment>
<comment type="domain">
    <text evidence="1">The RRM domain mediates interaction with U1 RNA.</text>
</comment>
<reference key="1">
    <citation type="submission" date="2006-03" db="EMBL/GenBank/DDBJ databases">
        <authorList>
            <consortium name="Sanger Xenopus tropicalis EST/cDNA project"/>
        </authorList>
    </citation>
    <scope>NUCLEOTIDE SEQUENCE [LARGE SCALE MRNA]</scope>
    <source>
        <tissue>Neurula</tissue>
    </source>
</reference>
<reference key="2">
    <citation type="submission" date="2004-08" db="EMBL/GenBank/DDBJ databases">
        <authorList>
            <consortium name="NIH - Xenopus Gene Collection (XGC) project"/>
        </authorList>
    </citation>
    <scope>NUCLEOTIDE SEQUENCE [LARGE SCALE MRNA]</scope>
    <source>
        <tissue>Embryo</tissue>
    </source>
</reference>
<accession>Q66II8</accession>
<accession>Q28IW1</accession>
<sequence>MTQFLPPNLLALFAPRDPVPYLPPLDKLPHEKHHNQPYCGIAPYIREFEDPRDAPPPTRAETREERMERKRREKIERRQQDVENELKIWDPHNDQNAQGDAFKTLFVARVNYDTTESKLRREFEVYGPIKRIHMVYNKRSGKPRGYAFIEYEHERDMHSAYKHADGKKIDGRRVLVDVERGRTVKGWRPRRLGGGLGGTRRGGADVNIRHSGRDDTSRYDERDRDRERERDRRERSRERDKERERRRSRSRERRRRSRSREKEERKRSRERSRDKDKDKDKDKDKEKDKDKDRDRKRRSRSRERKRERDRDREKKEDRVEGEVPESVDVPQDDAQTGDLGIDGIELKQEPEEKNRDRDRERDREKDRDKDRDRDRDRRRSHRDRERDKDRERDRDRRRDRDRDRDRDRDHKRERDRGDRGEKREERVPDNGMVMEQAEETSQDMYLDQESMQSGDGYLSTENGYMMEPPME</sequence>
<organism>
    <name type="scientific">Xenopus tropicalis</name>
    <name type="common">Western clawed frog</name>
    <name type="synonym">Silurana tropicalis</name>
    <dbReference type="NCBI Taxonomy" id="8364"/>
    <lineage>
        <taxon>Eukaryota</taxon>
        <taxon>Metazoa</taxon>
        <taxon>Chordata</taxon>
        <taxon>Craniata</taxon>
        <taxon>Vertebrata</taxon>
        <taxon>Euteleostomi</taxon>
        <taxon>Amphibia</taxon>
        <taxon>Batrachia</taxon>
        <taxon>Anura</taxon>
        <taxon>Pipoidea</taxon>
        <taxon>Pipidae</taxon>
        <taxon>Xenopodinae</taxon>
        <taxon>Xenopus</taxon>
        <taxon>Silurana</taxon>
    </lineage>
</organism>
<evidence type="ECO:0000250" key="1">
    <source>
        <dbReference type="UniProtKB" id="P08621"/>
    </source>
</evidence>
<evidence type="ECO:0000250" key="2">
    <source>
        <dbReference type="UniProtKB" id="Q62376"/>
    </source>
</evidence>
<evidence type="ECO:0000255" key="3">
    <source>
        <dbReference type="PROSITE-ProRule" id="PRU00176"/>
    </source>
</evidence>
<evidence type="ECO:0000256" key="4">
    <source>
        <dbReference type="SAM" id="MobiDB-lite"/>
    </source>
</evidence>
<dbReference type="EMBL" id="CR760195">
    <property type="protein sequence ID" value="CAJ82715.1"/>
    <property type="molecule type" value="mRNA"/>
</dbReference>
<dbReference type="EMBL" id="BC081331">
    <property type="protein sequence ID" value="AAH81331.1"/>
    <property type="molecule type" value="mRNA"/>
</dbReference>
<dbReference type="RefSeq" id="NP_001268699.1">
    <property type="nucleotide sequence ID" value="NM_001281770.1"/>
</dbReference>
<dbReference type="RefSeq" id="XP_012821930.1">
    <property type="nucleotide sequence ID" value="XM_012966476.3"/>
</dbReference>
<dbReference type="RefSeq" id="XP_012821931.1">
    <property type="nucleotide sequence ID" value="XM_012966477.3"/>
</dbReference>
<dbReference type="SMR" id="Q66II8"/>
<dbReference type="FunCoup" id="Q66II8">
    <property type="interactions" value="2052"/>
</dbReference>
<dbReference type="STRING" id="8364.ENSXETP00000030131"/>
<dbReference type="PaxDb" id="8364-ENSXETP00000049555"/>
<dbReference type="DNASU" id="493488"/>
<dbReference type="GeneID" id="493488"/>
<dbReference type="KEGG" id="xtr:493488"/>
<dbReference type="AGR" id="Xenbase:XB-GENE-992818"/>
<dbReference type="CTD" id="6625"/>
<dbReference type="Xenbase" id="XB-GENE-992818">
    <property type="gene designation" value="snrnp70"/>
</dbReference>
<dbReference type="eggNOG" id="KOG0113">
    <property type="taxonomic scope" value="Eukaryota"/>
</dbReference>
<dbReference type="HOGENOM" id="CLU_045151_1_0_1"/>
<dbReference type="InParanoid" id="Q66II8"/>
<dbReference type="OMA" id="GRTTKGW"/>
<dbReference type="OrthoDB" id="4207594at2759"/>
<dbReference type="PhylomeDB" id="Q66II8"/>
<dbReference type="TreeFam" id="TF314215"/>
<dbReference type="Proteomes" id="UP000008143">
    <property type="component" value="Chromosome 7"/>
</dbReference>
<dbReference type="Bgee" id="ENSXETG00000022919">
    <property type="expression patterns" value="Expressed in gastrula and 24 other cell types or tissues"/>
</dbReference>
<dbReference type="GO" id="GO:0016607">
    <property type="term" value="C:nuclear speck"/>
    <property type="evidence" value="ECO:0000250"/>
    <property type="project" value="UniProtKB"/>
</dbReference>
<dbReference type="GO" id="GO:0005634">
    <property type="term" value="C:nucleus"/>
    <property type="evidence" value="ECO:0000250"/>
    <property type="project" value="UniProtKB"/>
</dbReference>
<dbReference type="GO" id="GO:0005681">
    <property type="term" value="C:spliceosomal complex"/>
    <property type="evidence" value="ECO:0000250"/>
    <property type="project" value="UniProtKB"/>
</dbReference>
<dbReference type="GO" id="GO:0005685">
    <property type="term" value="C:U1 snRNP"/>
    <property type="evidence" value="ECO:0000250"/>
    <property type="project" value="UniProtKB"/>
</dbReference>
<dbReference type="GO" id="GO:0003723">
    <property type="term" value="F:RNA binding"/>
    <property type="evidence" value="ECO:0000250"/>
    <property type="project" value="UniProtKB"/>
</dbReference>
<dbReference type="GO" id="GO:0030619">
    <property type="term" value="F:U1 snRNA binding"/>
    <property type="evidence" value="ECO:0000250"/>
    <property type="project" value="UniProtKB"/>
</dbReference>
<dbReference type="GO" id="GO:0000398">
    <property type="term" value="P:mRNA splicing, via spliceosome"/>
    <property type="evidence" value="ECO:0000250"/>
    <property type="project" value="UniProtKB"/>
</dbReference>
<dbReference type="GO" id="GO:0043484">
    <property type="term" value="P:regulation of RNA splicing"/>
    <property type="evidence" value="ECO:0000250"/>
    <property type="project" value="UniProtKB"/>
</dbReference>
<dbReference type="CDD" id="cd12236">
    <property type="entry name" value="RRM_snRNP70"/>
    <property type="match status" value="1"/>
</dbReference>
<dbReference type="FunFam" id="3.30.70.330:FF:001585">
    <property type="entry name" value="U1 small nuclear ribonucleoprotein 70 kDa"/>
    <property type="match status" value="1"/>
</dbReference>
<dbReference type="Gene3D" id="3.30.70.330">
    <property type="match status" value="1"/>
</dbReference>
<dbReference type="InterPro" id="IPR012677">
    <property type="entry name" value="Nucleotide-bd_a/b_plait_sf"/>
</dbReference>
<dbReference type="InterPro" id="IPR035979">
    <property type="entry name" value="RBD_domain_sf"/>
</dbReference>
<dbReference type="InterPro" id="IPR000504">
    <property type="entry name" value="RRM_dom"/>
</dbReference>
<dbReference type="InterPro" id="IPR034143">
    <property type="entry name" value="snRNP70_RRM"/>
</dbReference>
<dbReference type="InterPro" id="IPR051183">
    <property type="entry name" value="U1_U11-U12_snRNP_70-35kDa"/>
</dbReference>
<dbReference type="InterPro" id="IPR022023">
    <property type="entry name" value="U1snRNP70_N"/>
</dbReference>
<dbReference type="PANTHER" id="PTHR13952">
    <property type="entry name" value="U1 SMALL NUCLEAR RIBONUCLEOPROTEIN 70 KD"/>
    <property type="match status" value="1"/>
</dbReference>
<dbReference type="PANTHER" id="PTHR13952:SF5">
    <property type="entry name" value="U1 SMALL NUCLEAR RIBONUCLEOPROTEIN 70 KDA"/>
    <property type="match status" value="1"/>
</dbReference>
<dbReference type="Pfam" id="PF00076">
    <property type="entry name" value="RRM_1"/>
    <property type="match status" value="1"/>
</dbReference>
<dbReference type="Pfam" id="PF12220">
    <property type="entry name" value="U1snRNP70_N"/>
    <property type="match status" value="1"/>
</dbReference>
<dbReference type="SMART" id="SM00360">
    <property type="entry name" value="RRM"/>
    <property type="match status" value="1"/>
</dbReference>
<dbReference type="SUPFAM" id="SSF54928">
    <property type="entry name" value="RNA-binding domain, RBD"/>
    <property type="match status" value="1"/>
</dbReference>
<dbReference type="PROSITE" id="PS50102">
    <property type="entry name" value="RRM"/>
    <property type="match status" value="1"/>
</dbReference>